<sequence length="358" mass="40781">MEEISARLSAVQDKILDIYEADKNDLTSQIEHWKLIRMECAIMYTARQMGISHLCHQVVPSLVASKTKAFQVIELQMALETLNASPYKTDEWTLQQTSLEVWLSEPQKCFKKKGITVTVQYDNDKANTMDYTNWSEIYIIEETTCTLVAGEVDYVGLYYIHGNEKTYFKYFKEDAKKYSKTQLWEVHVGSRVIVCPTSIPSDQISTTETADPKTTEATNNESTQGTKRRRLDLPDSRDNTQYSTKYTDCAVDSRPRGGGLHSTTNCTYKGRNVCSSKVSPIVHLKGDPNSLKCLRYRLKPFKDLYCNMSSTWHWTSDDKGDKVGIVTVTYTTETQRQLFLNTVKIPPTVQISTGVMSL</sequence>
<proteinExistence type="inferred from homology"/>
<gene>
    <name evidence="1" type="primary">E2</name>
</gene>
<comment type="function">
    <text evidence="1">Plays a role in the initiation of viral DNA replication. A dimer of E2 interacts with a dimer of E1 in order to improve specificity of E1 DNA binding activity. Once the complex recognizes and binds DNA at specific sites, the E2 dimer is removed from DNA. E2 also regulates viral transcription through binding to the E2RE response element (5'-ACCNNNNNNGGT-3') present in multiple copies in the regulatory regions of the viral genome. Activates or represses transcription depending on E2RE's position with regards to proximal promoter elements including the TATA-box. Repression occurs by sterically hindering the assembly of the transcription initiation complex.</text>
</comment>
<comment type="subunit">
    <text evidence="1">Binds DNA as homodimer. Interacts with protein E1; this interaction greatly increases E1 DNA-binding activity. Interacts with protein L1; this interaction enhances E2-dependent replication and transcription activation. Interacts with protein L2; this interaction inhibits E2 transcriptional activity but not DNA replication function E2. Interacts with protein E7; this interaction inhibits E7 oncogenic activity. Interacts with host TAF1; this interaction modulates E2-dependent transcriptional regulation. Interacts with host BRD4; this interaction mediates E2 transcriptional activation function. Additionally, the interaction with host BRD4 on mitotic chromosomes mediates tethering of the viral genome. Interacts with host TOPBP1; this interaction is required for optimal viral DNA replication.</text>
</comment>
<comment type="subcellular location">
    <subcellularLocation>
        <location evidence="1">Host nucleus</location>
    </subcellularLocation>
</comment>
<comment type="PTM">
    <text evidence="1">Phosphorylated.</text>
</comment>
<comment type="PTM">
    <text evidence="1">Sumoylation plays a regulatory role in E2 transcriptional activity.</text>
</comment>
<comment type="similarity">
    <text evidence="1">Belongs to the papillomaviridae E2 protein family.</text>
</comment>
<protein>
    <recommendedName>
        <fullName evidence="1">Regulatory protein E2</fullName>
    </recommendedName>
</protein>
<reference key="1">
    <citation type="journal article" date="1991" name="Virology">
        <title>Human papillomavirus type 58 DNA sequence.</title>
        <authorList>
            <person name="Kirii Y."/>
            <person name="Iwamoto S."/>
            <person name="Matsukura T."/>
        </authorList>
    </citation>
    <scope>NUCLEOTIDE SEQUENCE [GENOMIC DNA]</scope>
</reference>
<organism>
    <name type="scientific">Human papillomavirus 58</name>
    <dbReference type="NCBI Taxonomy" id="10598"/>
    <lineage>
        <taxon>Viruses</taxon>
        <taxon>Monodnaviria</taxon>
        <taxon>Shotokuvirae</taxon>
        <taxon>Cossaviricota</taxon>
        <taxon>Papovaviricetes</taxon>
        <taxon>Zurhausenvirales</taxon>
        <taxon>Papillomaviridae</taxon>
        <taxon>Firstpapillomavirinae</taxon>
        <taxon>Alphapapillomavirus</taxon>
        <taxon>Alphapapillomavirus 9</taxon>
    </lineage>
</organism>
<name>VE2_HPV58</name>
<dbReference type="EMBL" id="D90400">
    <property type="protein sequence ID" value="BAA31848.1"/>
    <property type="molecule type" value="Genomic_DNA"/>
</dbReference>
<dbReference type="PIR" id="B36779">
    <property type="entry name" value="W2WL58"/>
</dbReference>
<dbReference type="SMR" id="P26546"/>
<dbReference type="Proteomes" id="UP000007668">
    <property type="component" value="Genome"/>
</dbReference>
<dbReference type="GO" id="GO:0042025">
    <property type="term" value="C:host cell nucleus"/>
    <property type="evidence" value="ECO:0007669"/>
    <property type="project" value="UniProtKB-SubCell"/>
</dbReference>
<dbReference type="GO" id="GO:0003677">
    <property type="term" value="F:DNA binding"/>
    <property type="evidence" value="ECO:0007669"/>
    <property type="project" value="UniProtKB-UniRule"/>
</dbReference>
<dbReference type="GO" id="GO:0003700">
    <property type="term" value="F:DNA-binding transcription factor activity"/>
    <property type="evidence" value="ECO:0007669"/>
    <property type="project" value="UniProtKB-UniRule"/>
</dbReference>
<dbReference type="GO" id="GO:0000166">
    <property type="term" value="F:nucleotide binding"/>
    <property type="evidence" value="ECO:0007669"/>
    <property type="project" value="UniProtKB-UniRule"/>
</dbReference>
<dbReference type="GO" id="GO:0006260">
    <property type="term" value="P:DNA replication"/>
    <property type="evidence" value="ECO:0007669"/>
    <property type="project" value="UniProtKB-KW"/>
</dbReference>
<dbReference type="GO" id="GO:0006351">
    <property type="term" value="P:DNA-templated transcription"/>
    <property type="evidence" value="ECO:0007669"/>
    <property type="project" value="UniProtKB-UniRule"/>
</dbReference>
<dbReference type="GO" id="GO:0006275">
    <property type="term" value="P:regulation of DNA replication"/>
    <property type="evidence" value="ECO:0007669"/>
    <property type="project" value="UniProtKB-UniRule"/>
</dbReference>
<dbReference type="GO" id="GO:0039693">
    <property type="term" value="P:viral DNA genome replication"/>
    <property type="evidence" value="ECO:0007669"/>
    <property type="project" value="UniProtKB-UniRule"/>
</dbReference>
<dbReference type="Gene3D" id="3.30.70.330">
    <property type="match status" value="1"/>
</dbReference>
<dbReference type="Gene3D" id="1.10.287.30">
    <property type="entry name" value="E2 (early) protein, N terminal domain, subdomain 1"/>
    <property type="match status" value="1"/>
</dbReference>
<dbReference type="Gene3D" id="2.170.200.10">
    <property type="entry name" value="Papillomavirus E2 early protein domain"/>
    <property type="match status" value="1"/>
</dbReference>
<dbReference type="HAMAP" id="MF_04001">
    <property type="entry name" value="PPV_E2"/>
    <property type="match status" value="1"/>
</dbReference>
<dbReference type="InterPro" id="IPR035975">
    <property type="entry name" value="E2/EBNA1_C_sf"/>
</dbReference>
<dbReference type="InterPro" id="IPR012677">
    <property type="entry name" value="Nucleotide-bd_a/b_plait_sf"/>
</dbReference>
<dbReference type="InterPro" id="IPR000427">
    <property type="entry name" value="Papillomavirus_E2_C"/>
</dbReference>
<dbReference type="InterPro" id="IPR001866">
    <property type="entry name" value="PPV_E2_N"/>
</dbReference>
<dbReference type="InterPro" id="IPR033668">
    <property type="entry name" value="Reg_prot_E2"/>
</dbReference>
<dbReference type="InterPro" id="IPR036050">
    <property type="entry name" value="Regulatory_protein_E2_N"/>
</dbReference>
<dbReference type="InterPro" id="IPR042503">
    <property type="entry name" value="Regulatory_protein_E2_N_1"/>
</dbReference>
<dbReference type="InterPro" id="IPR042504">
    <property type="entry name" value="Regulatory_protein_E2_N_2"/>
</dbReference>
<dbReference type="Pfam" id="PF00511">
    <property type="entry name" value="PPV_E2_C"/>
    <property type="match status" value="1"/>
</dbReference>
<dbReference type="Pfam" id="PF00508">
    <property type="entry name" value="PPV_E2_N"/>
    <property type="match status" value="1"/>
</dbReference>
<dbReference type="SUPFAM" id="SSF51332">
    <property type="entry name" value="E2 regulatory, transactivation domain"/>
    <property type="match status" value="1"/>
</dbReference>
<dbReference type="SUPFAM" id="SSF54957">
    <property type="entry name" value="Viral DNA-binding domain"/>
    <property type="match status" value="1"/>
</dbReference>
<accession>P26546</accession>
<keyword id="KW-0010">Activator</keyword>
<keyword id="KW-0235">DNA replication</keyword>
<keyword id="KW-0238">DNA-binding</keyword>
<keyword id="KW-0244">Early protein</keyword>
<keyword id="KW-1048">Host nucleus</keyword>
<keyword id="KW-1017">Isopeptide bond</keyword>
<keyword id="KW-0597">Phosphoprotein</keyword>
<keyword id="KW-0678">Repressor</keyword>
<keyword id="KW-0804">Transcription</keyword>
<keyword id="KW-0805">Transcription regulation</keyword>
<keyword id="KW-0832">Ubl conjugation</keyword>
<feature type="chain" id="PRO_0000133236" description="Regulatory protein E2">
    <location>
        <begin position="1"/>
        <end position="358"/>
    </location>
</feature>
<feature type="region of interest" description="Transactivation domain" evidence="1">
    <location>
        <begin position="1"/>
        <end position="200"/>
    </location>
</feature>
<feature type="region of interest" description="Disordered" evidence="2">
    <location>
        <begin position="203"/>
        <end position="238"/>
    </location>
</feature>
<feature type="region of interest" description="DNA-binding domain" evidence="1">
    <location>
        <begin position="278"/>
        <end position="358"/>
    </location>
</feature>
<feature type="compositionally biased region" description="Polar residues" evidence="2">
    <location>
        <begin position="215"/>
        <end position="225"/>
    </location>
</feature>
<feature type="cross-link" description="Glycyl lysine isopeptide (Lys-Gly) (interchain with G-Cter in SUMO)" evidence="1">
    <location>
        <position position="285"/>
    </location>
</feature>
<evidence type="ECO:0000255" key="1">
    <source>
        <dbReference type="HAMAP-Rule" id="MF_04001"/>
    </source>
</evidence>
<evidence type="ECO:0000256" key="2">
    <source>
        <dbReference type="SAM" id="MobiDB-lite"/>
    </source>
</evidence>
<organismHost>
    <name type="scientific">Homo sapiens</name>
    <name type="common">Human</name>
    <dbReference type="NCBI Taxonomy" id="9606"/>
</organismHost>